<reference key="1">
    <citation type="submission" date="2009-03" db="EMBL/GenBank/DDBJ databases">
        <title>Complete genome sequence of Edwardsiella ictaluri 93-146.</title>
        <authorList>
            <person name="Williams M.L."/>
            <person name="Gillaspy A.F."/>
            <person name="Dyer D.W."/>
            <person name="Thune R.L."/>
            <person name="Waldbieser G.C."/>
            <person name="Schuster S.C."/>
            <person name="Gipson J."/>
            <person name="Zaitshik J."/>
            <person name="Landry C."/>
            <person name="Lawrence M.L."/>
        </authorList>
    </citation>
    <scope>NUCLEOTIDE SEQUENCE [LARGE SCALE GENOMIC DNA]</scope>
    <source>
        <strain>93-146</strain>
    </source>
</reference>
<sequence>MTPSMLPTEHYDDQLSEKIHRLEQMMQPFGAPAVQPFRSPVSHYRMRAEFRIWHDGDDLYHIMFDPQSKQRIRVDQFPAASELINRLMPLLLDALRPNPTLRHKLFQIDYLSTRSGQIIVSLLYHRTLDDAWKQAAEALRDALRGQGFAIQLIGRASKTKICLDQDWVDEVLPVAGRQMIYRQVENSFTQPNAAINIQMLEWALDATRGAEGDLLELYCGNGNFSLALAHNFRQVLATEIAKPSVAAAQYNIAANQINNVQIIRMSAEEFTQAMQGVRAFNRLQGIDLHSYECNTIFVDPPRSGLDTETLGMVQGYPNILYISCNPLTLCDNLHTLNQSHRITRLALFDQFPYTHHMECGVLLERR</sequence>
<gene>
    <name evidence="1" type="primary">trmA</name>
    <name type="ordered locus">NT01EI_3835</name>
</gene>
<evidence type="ECO:0000255" key="1">
    <source>
        <dbReference type="HAMAP-Rule" id="MF_01011"/>
    </source>
</evidence>
<dbReference type="EC" id="2.1.1.-" evidence="1"/>
<dbReference type="EC" id="2.1.1.35" evidence="1"/>
<dbReference type="EMBL" id="CP001600">
    <property type="protein sequence ID" value="ACR70954.1"/>
    <property type="molecule type" value="Genomic_DNA"/>
</dbReference>
<dbReference type="RefSeq" id="WP_015872986.1">
    <property type="nucleotide sequence ID" value="NZ_CP169062.1"/>
</dbReference>
<dbReference type="SMR" id="C5BC48"/>
<dbReference type="STRING" id="67780.B6E78_10750"/>
<dbReference type="GeneID" id="69540660"/>
<dbReference type="KEGG" id="eic:NT01EI_3835"/>
<dbReference type="PATRIC" id="fig|634503.3.peg.3422"/>
<dbReference type="HOGENOM" id="CLU_043022_0_0_6"/>
<dbReference type="OrthoDB" id="9804590at2"/>
<dbReference type="Proteomes" id="UP000001485">
    <property type="component" value="Chromosome"/>
</dbReference>
<dbReference type="GO" id="GO:0005829">
    <property type="term" value="C:cytosol"/>
    <property type="evidence" value="ECO:0007669"/>
    <property type="project" value="TreeGrafter"/>
</dbReference>
<dbReference type="GO" id="GO:0019843">
    <property type="term" value="F:rRNA binding"/>
    <property type="evidence" value="ECO:0007669"/>
    <property type="project" value="TreeGrafter"/>
</dbReference>
<dbReference type="GO" id="GO:0030697">
    <property type="term" value="F:tRNA (uracil(54)-C5)-methyltransferase activity, S-adenosyl methionine-dependent"/>
    <property type="evidence" value="ECO:0007669"/>
    <property type="project" value="UniProtKB-UniRule"/>
</dbReference>
<dbReference type="GO" id="GO:0000049">
    <property type="term" value="F:tRNA binding"/>
    <property type="evidence" value="ECO:0007669"/>
    <property type="project" value="TreeGrafter"/>
</dbReference>
<dbReference type="GO" id="GO:0030488">
    <property type="term" value="P:tRNA methylation"/>
    <property type="evidence" value="ECO:0007669"/>
    <property type="project" value="UniProtKB-UniRule"/>
</dbReference>
<dbReference type="CDD" id="cd02440">
    <property type="entry name" value="AdoMet_MTases"/>
    <property type="match status" value="1"/>
</dbReference>
<dbReference type="FunFam" id="2.40.50.1070:FF:000001">
    <property type="entry name" value="tRNA/tmRNA (uracil-C(5))-methyltransferase"/>
    <property type="match status" value="1"/>
</dbReference>
<dbReference type="FunFam" id="3.40.50.150:FF:000012">
    <property type="entry name" value="tRNA/tmRNA (uracil-C(5))-methyltransferase"/>
    <property type="match status" value="1"/>
</dbReference>
<dbReference type="Gene3D" id="2.40.50.1070">
    <property type="match status" value="1"/>
</dbReference>
<dbReference type="Gene3D" id="3.40.50.150">
    <property type="entry name" value="Vaccinia Virus protein VP39"/>
    <property type="match status" value="1"/>
</dbReference>
<dbReference type="HAMAP" id="MF_01011">
    <property type="entry name" value="RNA_methyltr_TrmA"/>
    <property type="match status" value="1"/>
</dbReference>
<dbReference type="InterPro" id="IPR030390">
    <property type="entry name" value="MeTrfase_TrmA_AS"/>
</dbReference>
<dbReference type="InterPro" id="IPR030391">
    <property type="entry name" value="MeTrfase_TrmA_CS"/>
</dbReference>
<dbReference type="InterPro" id="IPR029063">
    <property type="entry name" value="SAM-dependent_MTases_sf"/>
</dbReference>
<dbReference type="InterPro" id="IPR011869">
    <property type="entry name" value="TrmA_MeTrfase"/>
</dbReference>
<dbReference type="InterPro" id="IPR010280">
    <property type="entry name" value="U5_MeTrfase_fam"/>
</dbReference>
<dbReference type="NCBIfam" id="TIGR02143">
    <property type="entry name" value="trmA_only"/>
    <property type="match status" value="1"/>
</dbReference>
<dbReference type="PANTHER" id="PTHR47790">
    <property type="entry name" value="TRNA/TMRNA (URACIL-C(5))-METHYLTRANSFERASE"/>
    <property type="match status" value="1"/>
</dbReference>
<dbReference type="PANTHER" id="PTHR47790:SF2">
    <property type="entry name" value="TRNA_TMRNA (URACIL-C(5))-METHYLTRANSFERASE"/>
    <property type="match status" value="1"/>
</dbReference>
<dbReference type="Pfam" id="PF05958">
    <property type="entry name" value="tRNA_U5-meth_tr"/>
    <property type="match status" value="1"/>
</dbReference>
<dbReference type="SUPFAM" id="SSF53335">
    <property type="entry name" value="S-adenosyl-L-methionine-dependent methyltransferases"/>
    <property type="match status" value="1"/>
</dbReference>
<dbReference type="PROSITE" id="PS51687">
    <property type="entry name" value="SAM_MT_RNA_M5U"/>
    <property type="match status" value="1"/>
</dbReference>
<dbReference type="PROSITE" id="PS01230">
    <property type="entry name" value="TRMA_1"/>
    <property type="match status" value="1"/>
</dbReference>
<dbReference type="PROSITE" id="PS01231">
    <property type="entry name" value="TRMA_2"/>
    <property type="match status" value="1"/>
</dbReference>
<accession>C5BC48</accession>
<comment type="function">
    <text evidence="1">Dual-specificity methyltransferase that catalyzes the formation of 5-methyluridine at position 54 (m5U54) in all tRNAs, and that of position 341 (m5U341) in tmRNA (transfer-mRNA).</text>
</comment>
<comment type="catalytic activity">
    <reaction evidence="1">
        <text>uridine(54) in tRNA + S-adenosyl-L-methionine = 5-methyluridine(54) in tRNA + S-adenosyl-L-homocysteine + H(+)</text>
        <dbReference type="Rhea" id="RHEA:42712"/>
        <dbReference type="Rhea" id="RHEA-COMP:10167"/>
        <dbReference type="Rhea" id="RHEA-COMP:10193"/>
        <dbReference type="ChEBI" id="CHEBI:15378"/>
        <dbReference type="ChEBI" id="CHEBI:57856"/>
        <dbReference type="ChEBI" id="CHEBI:59789"/>
        <dbReference type="ChEBI" id="CHEBI:65315"/>
        <dbReference type="ChEBI" id="CHEBI:74447"/>
        <dbReference type="EC" id="2.1.1.35"/>
    </reaction>
</comment>
<comment type="catalytic activity">
    <reaction evidence="1">
        <text>uridine(341) in tmRNA + S-adenosyl-L-methionine = 5-methyluridine(341) in tmRNA + S-adenosyl-L-homocysteine + H(+)</text>
        <dbReference type="Rhea" id="RHEA:43612"/>
        <dbReference type="Rhea" id="RHEA-COMP:10630"/>
        <dbReference type="Rhea" id="RHEA-COMP:10631"/>
        <dbReference type="ChEBI" id="CHEBI:15378"/>
        <dbReference type="ChEBI" id="CHEBI:57856"/>
        <dbReference type="ChEBI" id="CHEBI:59789"/>
        <dbReference type="ChEBI" id="CHEBI:65315"/>
        <dbReference type="ChEBI" id="CHEBI:74447"/>
    </reaction>
</comment>
<comment type="similarity">
    <text evidence="1">Belongs to the class I-like SAM-binding methyltransferase superfamily. RNA M5U methyltransferase family. TrmA subfamily.</text>
</comment>
<organism>
    <name type="scientific">Edwardsiella ictaluri (strain 93-146)</name>
    <dbReference type="NCBI Taxonomy" id="634503"/>
    <lineage>
        <taxon>Bacteria</taxon>
        <taxon>Pseudomonadati</taxon>
        <taxon>Pseudomonadota</taxon>
        <taxon>Gammaproteobacteria</taxon>
        <taxon>Enterobacterales</taxon>
        <taxon>Hafniaceae</taxon>
        <taxon>Edwardsiella</taxon>
    </lineage>
</organism>
<proteinExistence type="inferred from homology"/>
<protein>
    <recommendedName>
        <fullName evidence="1">tRNA/tmRNA (uracil-C(5))-methyltransferase</fullName>
        <ecNumber evidence="1">2.1.1.-</ecNumber>
        <ecNumber evidence="1">2.1.1.35</ecNumber>
    </recommendedName>
    <alternativeName>
        <fullName evidence="1">tRNA (uracil(54)-C(5))-methyltransferase</fullName>
    </alternativeName>
    <alternativeName>
        <fullName evidence="1">tRNA(m5U54)-methyltransferase</fullName>
        <shortName evidence="1">RUMT</shortName>
    </alternativeName>
    <alternativeName>
        <fullName evidence="1">tmRNA (uracil(341)-C(5))-methyltransferase</fullName>
    </alternativeName>
</protein>
<name>TRMA_EDWI9</name>
<keyword id="KW-0489">Methyltransferase</keyword>
<keyword id="KW-0949">S-adenosyl-L-methionine</keyword>
<keyword id="KW-0808">Transferase</keyword>
<keyword id="KW-0819">tRNA processing</keyword>
<feature type="chain" id="PRO_1000213197" description="tRNA/tmRNA (uracil-C(5))-methyltransferase">
    <location>
        <begin position="1"/>
        <end position="366"/>
    </location>
</feature>
<feature type="active site" description="Nucleophile" evidence="1">
    <location>
        <position position="324"/>
    </location>
</feature>
<feature type="active site" description="Proton acceptor" evidence="1">
    <location>
        <position position="358"/>
    </location>
</feature>
<feature type="binding site" evidence="1">
    <location>
        <position position="190"/>
    </location>
    <ligand>
        <name>S-adenosyl-L-methionine</name>
        <dbReference type="ChEBI" id="CHEBI:59789"/>
    </ligand>
</feature>
<feature type="binding site" evidence="1">
    <location>
        <position position="218"/>
    </location>
    <ligand>
        <name>S-adenosyl-L-methionine</name>
        <dbReference type="ChEBI" id="CHEBI:59789"/>
    </ligand>
</feature>
<feature type="binding site" evidence="1">
    <location>
        <position position="223"/>
    </location>
    <ligand>
        <name>S-adenosyl-L-methionine</name>
        <dbReference type="ChEBI" id="CHEBI:59789"/>
    </ligand>
</feature>
<feature type="binding site" evidence="1">
    <location>
        <position position="239"/>
    </location>
    <ligand>
        <name>S-adenosyl-L-methionine</name>
        <dbReference type="ChEBI" id="CHEBI:59789"/>
    </ligand>
</feature>
<feature type="binding site" evidence="1">
    <location>
        <position position="299"/>
    </location>
    <ligand>
        <name>S-adenosyl-L-methionine</name>
        <dbReference type="ChEBI" id="CHEBI:59789"/>
    </ligand>
</feature>